<feature type="chain" id="PRO_1000118039" description="Elongation factor 4">
    <location>
        <begin position="1"/>
        <end position="602"/>
    </location>
</feature>
<feature type="domain" description="tr-type G">
    <location>
        <begin position="6"/>
        <end position="188"/>
    </location>
</feature>
<feature type="binding site" evidence="1">
    <location>
        <begin position="18"/>
        <end position="23"/>
    </location>
    <ligand>
        <name>GTP</name>
        <dbReference type="ChEBI" id="CHEBI:37565"/>
    </ligand>
</feature>
<feature type="binding site" evidence="1">
    <location>
        <begin position="135"/>
        <end position="138"/>
    </location>
    <ligand>
        <name>GTP</name>
        <dbReference type="ChEBI" id="CHEBI:37565"/>
    </ligand>
</feature>
<reference key="1">
    <citation type="submission" date="2009-03" db="EMBL/GenBank/DDBJ databases">
        <title>Brucella melitensis ATCC 23457 whole genome shotgun sequencing project.</title>
        <authorList>
            <person name="Setubal J.C."/>
            <person name="Boyle S."/>
            <person name="Crasta O.R."/>
            <person name="Gillespie J.J."/>
            <person name="Kenyon R.W."/>
            <person name="Lu J."/>
            <person name="Mane S."/>
            <person name="Nagrani S."/>
            <person name="Shallom J.M."/>
            <person name="Shallom S."/>
            <person name="Shukla M."/>
            <person name="Snyder E.E."/>
            <person name="Sobral B.W."/>
            <person name="Wattam A.R."/>
            <person name="Will R."/>
            <person name="Williams K."/>
            <person name="Yoo H."/>
            <person name="Munk C."/>
            <person name="Tapia R."/>
            <person name="Han C."/>
            <person name="Detter J.C."/>
            <person name="Bruce D."/>
            <person name="Brettin T.S."/>
        </authorList>
    </citation>
    <scope>NUCLEOTIDE SEQUENCE [LARGE SCALE GENOMIC DNA]</scope>
    <source>
        <strain>ATCC 23457</strain>
    </source>
</reference>
<protein>
    <recommendedName>
        <fullName evidence="1">Elongation factor 4</fullName>
        <shortName evidence="1">EF-4</shortName>
        <ecNumber evidence="1">3.6.5.n1</ecNumber>
    </recommendedName>
    <alternativeName>
        <fullName evidence="1">Ribosomal back-translocase LepA</fullName>
    </alternativeName>
</protein>
<sequence>MSTPLDHIRNFSIVAHIDHGKSTLADRLIQLTGGLDTREMKDQVLDSMDIERERGITIKAQTVRLSYKAKNGEDYVLNLIDTPGHVDFAYEVSRSLAACEGSLLVVDASQGVEAQTLANVYQAIDNNHEIVVVLNKIDLPAAEPERVKQQIEEVIGIDASDAVEISAKTGLGIEDVLEAIVNKLPAPKEGDRNAPLKAMLVDSWYDSYLGVIVLVRVIDGVLKKGQTIRMMGTGAKYPVERTGVFTPKMVQVDDLGPGELGFITASIKEVADTRVGDTITEDRRPTENMLSGFKPAQPVVFCGLFPVDAADFEDLRGAMGKLRLNDASFSFEMETSAALGFGFRCGFLGLLHLEIIQERLEREFNLDLITTAPSVVYRLNMTDGTHKELHNPADMPDVVKIASIEEPWIKATIMTPDDYLGAIMKLCQERRGIQIDLTYVGPRAMITYDLPLNEVVFDFYDRLKSISKGYASFDYNLSDYREGDLVKMSILVNEEPVDALSMLVHRSAAEKRGRALCEKLKELIPQHMFKIPIQAAIGGRIVARETISALRKDVTAKCYGGDVTRKRKLLEKQKESKKRMRQFGKVEIPQEAFIQALKMGDD</sequence>
<proteinExistence type="inferred from homology"/>
<organism>
    <name type="scientific">Brucella melitensis biotype 2 (strain ATCC 23457)</name>
    <dbReference type="NCBI Taxonomy" id="546272"/>
    <lineage>
        <taxon>Bacteria</taxon>
        <taxon>Pseudomonadati</taxon>
        <taxon>Pseudomonadota</taxon>
        <taxon>Alphaproteobacteria</taxon>
        <taxon>Hyphomicrobiales</taxon>
        <taxon>Brucellaceae</taxon>
        <taxon>Brucella/Ochrobactrum group</taxon>
        <taxon>Brucella</taxon>
    </lineage>
</organism>
<evidence type="ECO:0000255" key="1">
    <source>
        <dbReference type="HAMAP-Rule" id="MF_00071"/>
    </source>
</evidence>
<gene>
    <name evidence="1" type="primary">lepA</name>
    <name type="ordered locus">BMEA_B1024</name>
</gene>
<dbReference type="EC" id="3.6.5.n1" evidence="1"/>
<dbReference type="EMBL" id="CP001489">
    <property type="protein sequence ID" value="ACO02811.1"/>
    <property type="molecule type" value="Genomic_DNA"/>
</dbReference>
<dbReference type="RefSeq" id="WP_004682459.1">
    <property type="nucleotide sequence ID" value="NC_012442.1"/>
</dbReference>
<dbReference type="SMR" id="C0RMH8"/>
<dbReference type="GeneID" id="29595477"/>
<dbReference type="KEGG" id="bmi:BMEA_B1024"/>
<dbReference type="HOGENOM" id="CLU_009995_3_3_5"/>
<dbReference type="Proteomes" id="UP000001748">
    <property type="component" value="Chromosome II"/>
</dbReference>
<dbReference type="GO" id="GO:0005886">
    <property type="term" value="C:plasma membrane"/>
    <property type="evidence" value="ECO:0007669"/>
    <property type="project" value="UniProtKB-SubCell"/>
</dbReference>
<dbReference type="GO" id="GO:0005525">
    <property type="term" value="F:GTP binding"/>
    <property type="evidence" value="ECO:0007669"/>
    <property type="project" value="UniProtKB-UniRule"/>
</dbReference>
<dbReference type="GO" id="GO:0003924">
    <property type="term" value="F:GTPase activity"/>
    <property type="evidence" value="ECO:0007669"/>
    <property type="project" value="UniProtKB-UniRule"/>
</dbReference>
<dbReference type="GO" id="GO:0097216">
    <property type="term" value="F:guanosine tetraphosphate binding"/>
    <property type="evidence" value="ECO:0007669"/>
    <property type="project" value="UniProtKB-ARBA"/>
</dbReference>
<dbReference type="GO" id="GO:0043022">
    <property type="term" value="F:ribosome binding"/>
    <property type="evidence" value="ECO:0007669"/>
    <property type="project" value="UniProtKB-UniRule"/>
</dbReference>
<dbReference type="GO" id="GO:0003746">
    <property type="term" value="F:translation elongation factor activity"/>
    <property type="evidence" value="ECO:0007669"/>
    <property type="project" value="UniProtKB-UniRule"/>
</dbReference>
<dbReference type="GO" id="GO:0045727">
    <property type="term" value="P:positive regulation of translation"/>
    <property type="evidence" value="ECO:0007669"/>
    <property type="project" value="UniProtKB-UniRule"/>
</dbReference>
<dbReference type="CDD" id="cd03699">
    <property type="entry name" value="EF4_II"/>
    <property type="match status" value="1"/>
</dbReference>
<dbReference type="CDD" id="cd16260">
    <property type="entry name" value="EF4_III"/>
    <property type="match status" value="1"/>
</dbReference>
<dbReference type="CDD" id="cd01890">
    <property type="entry name" value="LepA"/>
    <property type="match status" value="1"/>
</dbReference>
<dbReference type="CDD" id="cd03709">
    <property type="entry name" value="lepA_C"/>
    <property type="match status" value="1"/>
</dbReference>
<dbReference type="FunFam" id="3.40.50.300:FF:000078">
    <property type="entry name" value="Elongation factor 4"/>
    <property type="match status" value="1"/>
</dbReference>
<dbReference type="FunFam" id="2.40.30.10:FF:000015">
    <property type="entry name" value="Translation factor GUF1, mitochondrial"/>
    <property type="match status" value="1"/>
</dbReference>
<dbReference type="FunFam" id="3.30.70.240:FF:000007">
    <property type="entry name" value="Translation factor GUF1, mitochondrial"/>
    <property type="match status" value="1"/>
</dbReference>
<dbReference type="FunFam" id="3.30.70.2570:FF:000001">
    <property type="entry name" value="Translation factor GUF1, mitochondrial"/>
    <property type="match status" value="1"/>
</dbReference>
<dbReference type="FunFam" id="3.30.70.870:FF:000004">
    <property type="entry name" value="Translation factor GUF1, mitochondrial"/>
    <property type="match status" value="1"/>
</dbReference>
<dbReference type="Gene3D" id="3.30.70.240">
    <property type="match status" value="1"/>
</dbReference>
<dbReference type="Gene3D" id="3.30.70.2570">
    <property type="entry name" value="Elongation factor 4, C-terminal domain"/>
    <property type="match status" value="1"/>
</dbReference>
<dbReference type="Gene3D" id="3.30.70.870">
    <property type="entry name" value="Elongation Factor G (Translational Gtpase), domain 3"/>
    <property type="match status" value="1"/>
</dbReference>
<dbReference type="Gene3D" id="3.40.50.300">
    <property type="entry name" value="P-loop containing nucleotide triphosphate hydrolases"/>
    <property type="match status" value="1"/>
</dbReference>
<dbReference type="Gene3D" id="2.40.30.10">
    <property type="entry name" value="Translation factors"/>
    <property type="match status" value="1"/>
</dbReference>
<dbReference type="HAMAP" id="MF_00071">
    <property type="entry name" value="LepA"/>
    <property type="match status" value="1"/>
</dbReference>
<dbReference type="InterPro" id="IPR006297">
    <property type="entry name" value="EF-4"/>
</dbReference>
<dbReference type="InterPro" id="IPR035647">
    <property type="entry name" value="EFG_III/V"/>
</dbReference>
<dbReference type="InterPro" id="IPR000640">
    <property type="entry name" value="EFG_V-like"/>
</dbReference>
<dbReference type="InterPro" id="IPR004161">
    <property type="entry name" value="EFTu-like_2"/>
</dbReference>
<dbReference type="InterPro" id="IPR031157">
    <property type="entry name" value="G_TR_CS"/>
</dbReference>
<dbReference type="InterPro" id="IPR038363">
    <property type="entry name" value="LepA_C_sf"/>
</dbReference>
<dbReference type="InterPro" id="IPR013842">
    <property type="entry name" value="LepA_CTD"/>
</dbReference>
<dbReference type="InterPro" id="IPR035654">
    <property type="entry name" value="LepA_IV"/>
</dbReference>
<dbReference type="InterPro" id="IPR027417">
    <property type="entry name" value="P-loop_NTPase"/>
</dbReference>
<dbReference type="InterPro" id="IPR005225">
    <property type="entry name" value="Small_GTP-bd"/>
</dbReference>
<dbReference type="InterPro" id="IPR000795">
    <property type="entry name" value="T_Tr_GTP-bd_dom"/>
</dbReference>
<dbReference type="NCBIfam" id="TIGR01393">
    <property type="entry name" value="lepA"/>
    <property type="match status" value="1"/>
</dbReference>
<dbReference type="NCBIfam" id="TIGR00231">
    <property type="entry name" value="small_GTP"/>
    <property type="match status" value="1"/>
</dbReference>
<dbReference type="PANTHER" id="PTHR43512:SF4">
    <property type="entry name" value="TRANSLATION FACTOR GUF1 HOMOLOG, CHLOROPLASTIC"/>
    <property type="match status" value="1"/>
</dbReference>
<dbReference type="PANTHER" id="PTHR43512">
    <property type="entry name" value="TRANSLATION FACTOR GUF1-RELATED"/>
    <property type="match status" value="1"/>
</dbReference>
<dbReference type="Pfam" id="PF00679">
    <property type="entry name" value="EFG_C"/>
    <property type="match status" value="1"/>
</dbReference>
<dbReference type="Pfam" id="PF00009">
    <property type="entry name" value="GTP_EFTU"/>
    <property type="match status" value="1"/>
</dbReference>
<dbReference type="Pfam" id="PF03144">
    <property type="entry name" value="GTP_EFTU_D2"/>
    <property type="match status" value="1"/>
</dbReference>
<dbReference type="Pfam" id="PF06421">
    <property type="entry name" value="LepA_C"/>
    <property type="match status" value="1"/>
</dbReference>
<dbReference type="PRINTS" id="PR00315">
    <property type="entry name" value="ELONGATNFCT"/>
</dbReference>
<dbReference type="SMART" id="SM00838">
    <property type="entry name" value="EFG_C"/>
    <property type="match status" value="1"/>
</dbReference>
<dbReference type="SUPFAM" id="SSF54980">
    <property type="entry name" value="EF-G C-terminal domain-like"/>
    <property type="match status" value="2"/>
</dbReference>
<dbReference type="SUPFAM" id="SSF52540">
    <property type="entry name" value="P-loop containing nucleoside triphosphate hydrolases"/>
    <property type="match status" value="1"/>
</dbReference>
<dbReference type="PROSITE" id="PS00301">
    <property type="entry name" value="G_TR_1"/>
    <property type="match status" value="1"/>
</dbReference>
<dbReference type="PROSITE" id="PS51722">
    <property type="entry name" value="G_TR_2"/>
    <property type="match status" value="1"/>
</dbReference>
<keyword id="KW-0997">Cell inner membrane</keyword>
<keyword id="KW-1003">Cell membrane</keyword>
<keyword id="KW-0342">GTP-binding</keyword>
<keyword id="KW-0378">Hydrolase</keyword>
<keyword id="KW-0472">Membrane</keyword>
<keyword id="KW-0547">Nucleotide-binding</keyword>
<keyword id="KW-0648">Protein biosynthesis</keyword>
<comment type="function">
    <text evidence="1">Required for accurate and efficient protein synthesis under certain stress conditions. May act as a fidelity factor of the translation reaction, by catalyzing a one-codon backward translocation of tRNAs on improperly translocated ribosomes. Back-translocation proceeds from a post-translocation (POST) complex to a pre-translocation (PRE) complex, thus giving elongation factor G a second chance to translocate the tRNAs correctly. Binds to ribosomes in a GTP-dependent manner.</text>
</comment>
<comment type="catalytic activity">
    <reaction evidence="1">
        <text>GTP + H2O = GDP + phosphate + H(+)</text>
        <dbReference type="Rhea" id="RHEA:19669"/>
        <dbReference type="ChEBI" id="CHEBI:15377"/>
        <dbReference type="ChEBI" id="CHEBI:15378"/>
        <dbReference type="ChEBI" id="CHEBI:37565"/>
        <dbReference type="ChEBI" id="CHEBI:43474"/>
        <dbReference type="ChEBI" id="CHEBI:58189"/>
        <dbReference type="EC" id="3.6.5.n1"/>
    </reaction>
</comment>
<comment type="subcellular location">
    <subcellularLocation>
        <location evidence="1">Cell inner membrane</location>
        <topology evidence="1">Peripheral membrane protein</topology>
        <orientation evidence="1">Cytoplasmic side</orientation>
    </subcellularLocation>
</comment>
<comment type="similarity">
    <text evidence="1">Belongs to the TRAFAC class translation factor GTPase superfamily. Classic translation factor GTPase family. LepA subfamily.</text>
</comment>
<accession>C0RMH8</accession>
<name>LEPA_BRUMB</name>